<dbReference type="EMBL" id="AE008923">
    <property type="protein sequence ID" value="AAM36098.1"/>
    <property type="molecule type" value="Genomic_DNA"/>
</dbReference>
<dbReference type="RefSeq" id="WP_011050788.1">
    <property type="nucleotide sequence ID" value="NC_003919.1"/>
</dbReference>
<dbReference type="SMR" id="Q8PN47"/>
<dbReference type="GeneID" id="66910396"/>
<dbReference type="KEGG" id="xac:XAC1226"/>
<dbReference type="eggNOG" id="COG0850">
    <property type="taxonomic scope" value="Bacteria"/>
</dbReference>
<dbReference type="HOGENOM" id="CLU_067812_0_1_6"/>
<dbReference type="Proteomes" id="UP000000576">
    <property type="component" value="Chromosome"/>
</dbReference>
<dbReference type="GO" id="GO:0000902">
    <property type="term" value="P:cell morphogenesis"/>
    <property type="evidence" value="ECO:0007669"/>
    <property type="project" value="InterPro"/>
</dbReference>
<dbReference type="GO" id="GO:0000917">
    <property type="term" value="P:division septum assembly"/>
    <property type="evidence" value="ECO:0007669"/>
    <property type="project" value="UniProtKB-KW"/>
</dbReference>
<dbReference type="GO" id="GO:0051302">
    <property type="term" value="P:regulation of cell division"/>
    <property type="evidence" value="ECO:0007669"/>
    <property type="project" value="InterPro"/>
</dbReference>
<dbReference type="GO" id="GO:1901891">
    <property type="term" value="P:regulation of cell septum assembly"/>
    <property type="evidence" value="ECO:0007669"/>
    <property type="project" value="InterPro"/>
</dbReference>
<dbReference type="Gene3D" id="2.160.20.70">
    <property type="match status" value="1"/>
</dbReference>
<dbReference type="Gene3D" id="3.30.70.260">
    <property type="match status" value="1"/>
</dbReference>
<dbReference type="HAMAP" id="MF_00267">
    <property type="entry name" value="MinC"/>
    <property type="match status" value="1"/>
</dbReference>
<dbReference type="InterPro" id="IPR016098">
    <property type="entry name" value="CAP/MinC_C"/>
</dbReference>
<dbReference type="InterPro" id="IPR013033">
    <property type="entry name" value="MinC"/>
</dbReference>
<dbReference type="InterPro" id="IPR036145">
    <property type="entry name" value="MinC_C_sf"/>
</dbReference>
<dbReference type="InterPro" id="IPR007874">
    <property type="entry name" value="MinC_N"/>
</dbReference>
<dbReference type="InterPro" id="IPR005526">
    <property type="entry name" value="Septum_form_inhib_MinC_C"/>
</dbReference>
<dbReference type="NCBIfam" id="TIGR01222">
    <property type="entry name" value="minC"/>
    <property type="match status" value="1"/>
</dbReference>
<dbReference type="PANTHER" id="PTHR34108">
    <property type="entry name" value="SEPTUM SITE-DETERMINING PROTEIN MINC"/>
    <property type="match status" value="1"/>
</dbReference>
<dbReference type="PANTHER" id="PTHR34108:SF1">
    <property type="entry name" value="SEPTUM SITE-DETERMINING PROTEIN MINC"/>
    <property type="match status" value="1"/>
</dbReference>
<dbReference type="Pfam" id="PF03775">
    <property type="entry name" value="MinC_C"/>
    <property type="match status" value="1"/>
</dbReference>
<dbReference type="Pfam" id="PF05209">
    <property type="entry name" value="MinC_N"/>
    <property type="match status" value="1"/>
</dbReference>
<dbReference type="SUPFAM" id="SSF63848">
    <property type="entry name" value="Cell-division inhibitor MinC, C-terminal domain"/>
    <property type="match status" value="1"/>
</dbReference>
<accession>Q8PN47</accession>
<evidence type="ECO:0000255" key="1">
    <source>
        <dbReference type="HAMAP-Rule" id="MF_00267"/>
    </source>
</evidence>
<evidence type="ECO:0000256" key="2">
    <source>
        <dbReference type="SAM" id="MobiDB-lite"/>
    </source>
</evidence>
<name>MINC_XANAC</name>
<comment type="function">
    <text evidence="1">Cell division inhibitor that blocks the formation of polar Z ring septums. Rapidly oscillates between the poles of the cell to destabilize FtsZ filaments that have formed before they mature into polar Z rings. Prevents FtsZ polymerization.</text>
</comment>
<comment type="subunit">
    <text evidence="1">Interacts with MinD and FtsZ.</text>
</comment>
<comment type="similarity">
    <text evidence="1">Belongs to the MinC family.</text>
</comment>
<keyword id="KW-0131">Cell cycle</keyword>
<keyword id="KW-0132">Cell division</keyword>
<keyword id="KW-0717">Septation</keyword>
<protein>
    <recommendedName>
        <fullName evidence="1">Probable septum site-determining protein MinC</fullName>
    </recommendedName>
</protein>
<proteinExistence type="inferred from homology"/>
<sequence length="249" mass="26521">MASVNVDFEQAGELKIGQVGIANLRVRTLDVSRLVQEMRERVTRAPKLFGRAAVILDFGGLSQVPDLATAKALLEGLRDAGVLPVALAYGTSEIDLLSQQLGVPLLAKFRAQYEPTAVSPPPPPPPPPARAEPAPPAARPAPGRMQRTAVRSGQQLYAENCDLTVLSTVGAGAEVIADGSIHIYGTLRGRALAGAQGNPDARIFCRDFHAELVAIAGHYKVLDDVPMDLRGKAVQVWLEQDQIKIAALD</sequence>
<gene>
    <name evidence="1" type="primary">minC</name>
    <name type="ordered locus">XAC1226</name>
</gene>
<reference key="1">
    <citation type="journal article" date="2002" name="Nature">
        <title>Comparison of the genomes of two Xanthomonas pathogens with differing host specificities.</title>
        <authorList>
            <person name="da Silva A.C.R."/>
            <person name="Ferro J.A."/>
            <person name="Reinach F.C."/>
            <person name="Farah C.S."/>
            <person name="Furlan L.R."/>
            <person name="Quaggio R.B."/>
            <person name="Monteiro-Vitorello C.B."/>
            <person name="Van Sluys M.A."/>
            <person name="Almeida N.F. Jr."/>
            <person name="Alves L.M.C."/>
            <person name="do Amaral A.M."/>
            <person name="Bertolini M.C."/>
            <person name="Camargo L.E.A."/>
            <person name="Camarotte G."/>
            <person name="Cannavan F."/>
            <person name="Cardozo J."/>
            <person name="Chambergo F."/>
            <person name="Ciapina L.P."/>
            <person name="Cicarelli R.M.B."/>
            <person name="Coutinho L.L."/>
            <person name="Cursino-Santos J.R."/>
            <person name="El-Dorry H."/>
            <person name="Faria J.B."/>
            <person name="Ferreira A.J.S."/>
            <person name="Ferreira R.C.C."/>
            <person name="Ferro M.I.T."/>
            <person name="Formighieri E.F."/>
            <person name="Franco M.C."/>
            <person name="Greggio C.C."/>
            <person name="Gruber A."/>
            <person name="Katsuyama A.M."/>
            <person name="Kishi L.T."/>
            <person name="Leite R.P."/>
            <person name="Lemos E.G.M."/>
            <person name="Lemos M.V.F."/>
            <person name="Locali E.C."/>
            <person name="Machado M.A."/>
            <person name="Madeira A.M.B.N."/>
            <person name="Martinez-Rossi N.M."/>
            <person name="Martins E.C."/>
            <person name="Meidanis J."/>
            <person name="Menck C.F.M."/>
            <person name="Miyaki C.Y."/>
            <person name="Moon D.H."/>
            <person name="Moreira L.M."/>
            <person name="Novo M.T.M."/>
            <person name="Okura V.K."/>
            <person name="Oliveira M.C."/>
            <person name="Oliveira V.R."/>
            <person name="Pereira H.A."/>
            <person name="Rossi A."/>
            <person name="Sena J.A.D."/>
            <person name="Silva C."/>
            <person name="de Souza R.F."/>
            <person name="Spinola L.A.F."/>
            <person name="Takita M.A."/>
            <person name="Tamura R.E."/>
            <person name="Teixeira E.C."/>
            <person name="Tezza R.I.D."/>
            <person name="Trindade dos Santos M."/>
            <person name="Truffi D."/>
            <person name="Tsai S.M."/>
            <person name="White F.F."/>
            <person name="Setubal J.C."/>
            <person name="Kitajima J.P."/>
        </authorList>
    </citation>
    <scope>NUCLEOTIDE SEQUENCE [LARGE SCALE GENOMIC DNA]</scope>
    <source>
        <strain>306</strain>
    </source>
</reference>
<feature type="chain" id="PRO_0000189073" description="Probable septum site-determining protein MinC">
    <location>
        <begin position="1"/>
        <end position="249"/>
    </location>
</feature>
<feature type="region of interest" description="Disordered" evidence="2">
    <location>
        <begin position="115"/>
        <end position="144"/>
    </location>
</feature>
<feature type="compositionally biased region" description="Pro residues" evidence="2">
    <location>
        <begin position="118"/>
        <end position="139"/>
    </location>
</feature>
<organism>
    <name type="scientific">Xanthomonas axonopodis pv. citri (strain 306)</name>
    <dbReference type="NCBI Taxonomy" id="190486"/>
    <lineage>
        <taxon>Bacteria</taxon>
        <taxon>Pseudomonadati</taxon>
        <taxon>Pseudomonadota</taxon>
        <taxon>Gammaproteobacteria</taxon>
        <taxon>Lysobacterales</taxon>
        <taxon>Lysobacteraceae</taxon>
        <taxon>Xanthomonas</taxon>
    </lineage>
</organism>